<keyword id="KW-0067">ATP-binding</keyword>
<keyword id="KW-0143">Chaperone</keyword>
<keyword id="KW-0963">Cytoplasm</keyword>
<keyword id="KW-0413">Isomerase</keyword>
<keyword id="KW-0547">Nucleotide-binding</keyword>
<keyword id="KW-1185">Reference proteome</keyword>
<reference key="1">
    <citation type="journal article" date="2007" name="ISME J.">
        <title>Population level functional diversity in a microbial community revealed by comparative genomic and metagenomic analyses.</title>
        <authorList>
            <person name="Bhaya D."/>
            <person name="Grossman A.R."/>
            <person name="Steunou A.-S."/>
            <person name="Khuri N."/>
            <person name="Cohan F.M."/>
            <person name="Hamamura N."/>
            <person name="Melendrez M.C."/>
            <person name="Bateson M.M."/>
            <person name="Ward D.M."/>
            <person name="Heidelberg J.F."/>
        </authorList>
    </citation>
    <scope>NUCLEOTIDE SEQUENCE [LARGE SCALE GENOMIC DNA]</scope>
    <source>
        <strain>JA-2-3B'a(2-13)</strain>
    </source>
</reference>
<protein>
    <recommendedName>
        <fullName evidence="1">Chaperonin GroEL 2</fullName>
        <ecNumber evidence="1">5.6.1.7</ecNumber>
    </recommendedName>
    <alternativeName>
        <fullName evidence="1">60 kDa chaperonin 2</fullName>
    </alternativeName>
    <alternativeName>
        <fullName evidence="1">Chaperonin-60 2</fullName>
        <shortName evidence="1">Cpn60 2</shortName>
    </alternativeName>
</protein>
<accession>Q2JKV7</accession>
<organism>
    <name type="scientific">Synechococcus sp. (strain JA-2-3B'a(2-13))</name>
    <name type="common">Cyanobacteria bacterium Yellowstone B-Prime</name>
    <dbReference type="NCBI Taxonomy" id="321332"/>
    <lineage>
        <taxon>Bacteria</taxon>
        <taxon>Bacillati</taxon>
        <taxon>Cyanobacteriota</taxon>
        <taxon>Cyanophyceae</taxon>
        <taxon>Synechococcales</taxon>
        <taxon>Synechococcaceae</taxon>
        <taxon>Synechococcus</taxon>
    </lineage>
</organism>
<proteinExistence type="inferred from homology"/>
<sequence>MAKRILFREEARKALEQGINQLADAIKVTIGPKGRNVVLEKKFGAPQIVNDGVTIAKEIELADPLENTGAQLMREVASKTNDVAGDGTTTATILAQSMVREGLKNISAGANPVALRRGIEKTTAYLVEQIAAHAKPVEGRKTIAEVATISAGNDSEVGEMIAKAMDAVGRDGVITVEESKSLETELDVVEGMQFDRGYISPYFVTDSERMVAEYENAYLLITSNKISSLQDLVPILERVAREGRPLLVIAEDVEGEALATLVVNRLRGVLNAVAVKAPAFGDRRKAMLEDIAILTGGQLISEDVGIKLDKVTLDMMGVARKITVTKDKTTIVTDGSTKAAVEKRVAQIRKQLETTDSEYDREKLQERIAKLAGGVAVIKVGAATETELKDRKLRIEDALNATRAAVEEGIVPGGGATLLHLSKGIPAFKAKLNAEEQVGAEIVYRALQAPLFQIAHNAGLEGSVVVEKVLEKEMPFGFDALTGTYVDMFAQGIVDPAKVVRSALQNAASIAGMYLTTEAIVVEKPEPKPAAGSAPKGMM</sequence>
<dbReference type="EC" id="5.6.1.7" evidence="1"/>
<dbReference type="EMBL" id="CP000240">
    <property type="protein sequence ID" value="ABD02671.1"/>
    <property type="molecule type" value="Genomic_DNA"/>
</dbReference>
<dbReference type="RefSeq" id="WP_011433315.1">
    <property type="nucleotide sequence ID" value="NC_007776.1"/>
</dbReference>
<dbReference type="SMR" id="Q2JKV7"/>
<dbReference type="STRING" id="321332.CYB_1712"/>
<dbReference type="KEGG" id="cyb:CYB_1712"/>
<dbReference type="eggNOG" id="COG0459">
    <property type="taxonomic scope" value="Bacteria"/>
</dbReference>
<dbReference type="HOGENOM" id="CLU_016503_3_0_3"/>
<dbReference type="OrthoDB" id="9766614at2"/>
<dbReference type="Proteomes" id="UP000001938">
    <property type="component" value="Chromosome"/>
</dbReference>
<dbReference type="GO" id="GO:0005737">
    <property type="term" value="C:cytoplasm"/>
    <property type="evidence" value="ECO:0007669"/>
    <property type="project" value="UniProtKB-SubCell"/>
</dbReference>
<dbReference type="GO" id="GO:0005524">
    <property type="term" value="F:ATP binding"/>
    <property type="evidence" value="ECO:0007669"/>
    <property type="project" value="UniProtKB-UniRule"/>
</dbReference>
<dbReference type="GO" id="GO:0140662">
    <property type="term" value="F:ATP-dependent protein folding chaperone"/>
    <property type="evidence" value="ECO:0007669"/>
    <property type="project" value="InterPro"/>
</dbReference>
<dbReference type="GO" id="GO:0016853">
    <property type="term" value="F:isomerase activity"/>
    <property type="evidence" value="ECO:0007669"/>
    <property type="project" value="UniProtKB-KW"/>
</dbReference>
<dbReference type="GO" id="GO:0051082">
    <property type="term" value="F:unfolded protein binding"/>
    <property type="evidence" value="ECO:0007669"/>
    <property type="project" value="UniProtKB-UniRule"/>
</dbReference>
<dbReference type="GO" id="GO:0042026">
    <property type="term" value="P:protein refolding"/>
    <property type="evidence" value="ECO:0007669"/>
    <property type="project" value="UniProtKB-UniRule"/>
</dbReference>
<dbReference type="CDD" id="cd03344">
    <property type="entry name" value="GroEL"/>
    <property type="match status" value="1"/>
</dbReference>
<dbReference type="FunFam" id="3.50.7.10:FF:000001">
    <property type="entry name" value="60 kDa chaperonin"/>
    <property type="match status" value="1"/>
</dbReference>
<dbReference type="Gene3D" id="3.50.7.10">
    <property type="entry name" value="GroEL"/>
    <property type="match status" value="1"/>
</dbReference>
<dbReference type="Gene3D" id="1.10.560.10">
    <property type="entry name" value="GroEL-like equatorial domain"/>
    <property type="match status" value="1"/>
</dbReference>
<dbReference type="Gene3D" id="3.30.260.10">
    <property type="entry name" value="TCP-1-like chaperonin intermediate domain"/>
    <property type="match status" value="1"/>
</dbReference>
<dbReference type="HAMAP" id="MF_00600">
    <property type="entry name" value="CH60"/>
    <property type="match status" value="1"/>
</dbReference>
<dbReference type="InterPro" id="IPR018370">
    <property type="entry name" value="Chaperonin_Cpn60_CS"/>
</dbReference>
<dbReference type="InterPro" id="IPR001844">
    <property type="entry name" value="Cpn60/GroEL"/>
</dbReference>
<dbReference type="InterPro" id="IPR002423">
    <property type="entry name" value="Cpn60/GroEL/TCP-1"/>
</dbReference>
<dbReference type="InterPro" id="IPR027409">
    <property type="entry name" value="GroEL-like_apical_dom_sf"/>
</dbReference>
<dbReference type="InterPro" id="IPR027413">
    <property type="entry name" value="GROEL-like_equatorial_sf"/>
</dbReference>
<dbReference type="InterPro" id="IPR027410">
    <property type="entry name" value="TCP-1-like_intermed_sf"/>
</dbReference>
<dbReference type="NCBIfam" id="TIGR02348">
    <property type="entry name" value="GroEL"/>
    <property type="match status" value="1"/>
</dbReference>
<dbReference type="NCBIfam" id="NF000592">
    <property type="entry name" value="PRK00013.1"/>
    <property type="match status" value="1"/>
</dbReference>
<dbReference type="NCBIfam" id="NF009487">
    <property type="entry name" value="PRK12849.1"/>
    <property type="match status" value="1"/>
</dbReference>
<dbReference type="NCBIfam" id="NF009488">
    <property type="entry name" value="PRK12850.1"/>
    <property type="match status" value="1"/>
</dbReference>
<dbReference type="NCBIfam" id="NF009489">
    <property type="entry name" value="PRK12851.1"/>
    <property type="match status" value="1"/>
</dbReference>
<dbReference type="PANTHER" id="PTHR45633">
    <property type="entry name" value="60 KDA HEAT SHOCK PROTEIN, MITOCHONDRIAL"/>
    <property type="match status" value="1"/>
</dbReference>
<dbReference type="Pfam" id="PF00118">
    <property type="entry name" value="Cpn60_TCP1"/>
    <property type="match status" value="1"/>
</dbReference>
<dbReference type="PRINTS" id="PR00298">
    <property type="entry name" value="CHAPERONIN60"/>
</dbReference>
<dbReference type="SUPFAM" id="SSF52029">
    <property type="entry name" value="GroEL apical domain-like"/>
    <property type="match status" value="1"/>
</dbReference>
<dbReference type="SUPFAM" id="SSF48592">
    <property type="entry name" value="GroEL equatorial domain-like"/>
    <property type="match status" value="2"/>
</dbReference>
<dbReference type="PROSITE" id="PS00296">
    <property type="entry name" value="CHAPERONINS_CPN60"/>
    <property type="match status" value="1"/>
</dbReference>
<feature type="chain" id="PRO_0000257007" description="Chaperonin GroEL 2">
    <location>
        <begin position="1"/>
        <end position="539"/>
    </location>
</feature>
<feature type="binding site" evidence="1">
    <location>
        <begin position="29"/>
        <end position="32"/>
    </location>
    <ligand>
        <name>ATP</name>
        <dbReference type="ChEBI" id="CHEBI:30616"/>
    </ligand>
</feature>
<feature type="binding site" evidence="1">
    <location>
        <begin position="86"/>
        <end position="90"/>
    </location>
    <ligand>
        <name>ATP</name>
        <dbReference type="ChEBI" id="CHEBI:30616"/>
    </ligand>
</feature>
<feature type="binding site" evidence="1">
    <location>
        <position position="414"/>
    </location>
    <ligand>
        <name>ATP</name>
        <dbReference type="ChEBI" id="CHEBI:30616"/>
    </ligand>
</feature>
<feature type="binding site" evidence="1">
    <location>
        <begin position="479"/>
        <end position="481"/>
    </location>
    <ligand>
        <name>ATP</name>
        <dbReference type="ChEBI" id="CHEBI:30616"/>
    </ligand>
</feature>
<feature type="binding site" evidence="1">
    <location>
        <position position="495"/>
    </location>
    <ligand>
        <name>ATP</name>
        <dbReference type="ChEBI" id="CHEBI:30616"/>
    </ligand>
</feature>
<name>CH602_SYNJB</name>
<evidence type="ECO:0000255" key="1">
    <source>
        <dbReference type="HAMAP-Rule" id="MF_00600"/>
    </source>
</evidence>
<gene>
    <name evidence="1" type="primary">groEL2</name>
    <name evidence="1" type="synonym">groL2</name>
    <name type="ordered locus">CYB_1712</name>
</gene>
<comment type="function">
    <text evidence="1">Together with its co-chaperonin GroES, plays an essential role in assisting protein folding. The GroEL-GroES system forms a nano-cage that allows encapsulation of the non-native substrate proteins and provides a physical environment optimized to promote and accelerate protein folding.</text>
</comment>
<comment type="catalytic activity">
    <reaction evidence="1">
        <text>ATP + H2O + a folded polypeptide = ADP + phosphate + an unfolded polypeptide.</text>
        <dbReference type="EC" id="5.6.1.7"/>
    </reaction>
</comment>
<comment type="subunit">
    <text evidence="1">Forms a cylinder of 14 subunits composed of two heptameric rings stacked back-to-back. Interacts with the co-chaperonin GroES.</text>
</comment>
<comment type="subcellular location">
    <subcellularLocation>
        <location evidence="1">Cytoplasm</location>
    </subcellularLocation>
</comment>
<comment type="similarity">
    <text evidence="1">Belongs to the chaperonin (HSP60) family.</text>
</comment>